<comment type="function">
    <text evidence="1">Dual-specificity methyltransferase that catalyzes the formation of 5-methyluridine at position 54 (m5U54) in all tRNAs, and that of position 341 (m5U341) in tmRNA (transfer-mRNA).</text>
</comment>
<comment type="catalytic activity">
    <reaction evidence="1">
        <text>uridine(54) in tRNA + S-adenosyl-L-methionine = 5-methyluridine(54) in tRNA + S-adenosyl-L-homocysteine + H(+)</text>
        <dbReference type="Rhea" id="RHEA:42712"/>
        <dbReference type="Rhea" id="RHEA-COMP:10167"/>
        <dbReference type="Rhea" id="RHEA-COMP:10193"/>
        <dbReference type="ChEBI" id="CHEBI:15378"/>
        <dbReference type="ChEBI" id="CHEBI:57856"/>
        <dbReference type="ChEBI" id="CHEBI:59789"/>
        <dbReference type="ChEBI" id="CHEBI:65315"/>
        <dbReference type="ChEBI" id="CHEBI:74447"/>
        <dbReference type="EC" id="2.1.1.35"/>
    </reaction>
</comment>
<comment type="catalytic activity">
    <reaction evidence="1">
        <text>uridine(341) in tmRNA + S-adenosyl-L-methionine = 5-methyluridine(341) in tmRNA + S-adenosyl-L-homocysteine + H(+)</text>
        <dbReference type="Rhea" id="RHEA:43612"/>
        <dbReference type="Rhea" id="RHEA-COMP:10630"/>
        <dbReference type="Rhea" id="RHEA-COMP:10631"/>
        <dbReference type="ChEBI" id="CHEBI:15378"/>
        <dbReference type="ChEBI" id="CHEBI:57856"/>
        <dbReference type="ChEBI" id="CHEBI:59789"/>
        <dbReference type="ChEBI" id="CHEBI:65315"/>
        <dbReference type="ChEBI" id="CHEBI:74447"/>
    </reaction>
</comment>
<comment type="similarity">
    <text evidence="1">Belongs to the class I-like SAM-binding methyltransferase superfamily. RNA M5U methyltransferase family. TrmA subfamily.</text>
</comment>
<keyword id="KW-0489">Methyltransferase</keyword>
<keyword id="KW-0949">S-adenosyl-L-methionine</keyword>
<keyword id="KW-0808">Transferase</keyword>
<keyword id="KW-0819">tRNA processing</keyword>
<sequence>MQLPISQYNELLQKKLEKLTALLRPFNAPDIQVFDSPTSHYRMRAEFRIWHEQDDFYHIMFDQATLQRYRVDEFPIASTQINRMMQTLLPLLKQQEVLHKKLFQIDYLSTLSNKIIVSLLYHKTLTEEWESAAKNLKDLLEKQGFNVQIIGRASKQKICFEQDYVDEVLPVNGRNYVYRQVENSFTQPNATVNCKMLEWAIDCTQNSEGDLLELYCGNGNFSIALAQNFRKVLATEIAKPSVAAAQFNIAENKVDNLQIIRMSAEEFTQAMNGVRAFNRLKGIDLKSYECNTIFVDPPRAGLDPDTVKLVQNYDRILYISCNPHTLCDNLVELSKTHRIEKAALFDQFPYTDHMESGVWLIRK</sequence>
<reference key="1">
    <citation type="journal article" date="2007" name="Genome Biol.">
        <title>Characterization and modeling of the Haemophilus influenzae core and supragenomes based on the complete genomic sequences of Rd and 12 clinical nontypeable strains.</title>
        <authorList>
            <person name="Hogg J.S."/>
            <person name="Hu F.Z."/>
            <person name="Janto B."/>
            <person name="Boissy R."/>
            <person name="Hayes J."/>
            <person name="Keefe R."/>
            <person name="Post J.C."/>
            <person name="Ehrlich G.D."/>
        </authorList>
    </citation>
    <scope>NUCLEOTIDE SEQUENCE [LARGE SCALE GENOMIC DNA]</scope>
    <source>
        <strain>PittEE</strain>
    </source>
</reference>
<protein>
    <recommendedName>
        <fullName evidence="1">tRNA/tmRNA (uracil-C(5))-methyltransferase</fullName>
        <ecNumber evidence="1">2.1.1.-</ecNumber>
        <ecNumber evidence="1">2.1.1.35</ecNumber>
    </recommendedName>
    <alternativeName>
        <fullName evidence="1">tRNA (uracil(54)-C(5))-methyltransferase</fullName>
    </alternativeName>
    <alternativeName>
        <fullName evidence="1">tRNA(m5U54)-methyltransferase</fullName>
        <shortName evidence="1">RUMT</shortName>
    </alternativeName>
    <alternativeName>
        <fullName evidence="1">tmRNA (uracil(341)-C(5))-methyltransferase</fullName>
    </alternativeName>
</protein>
<gene>
    <name evidence="1" type="primary">trmA</name>
    <name type="ordered locus">CGSHiEE_07810</name>
</gene>
<dbReference type="EC" id="2.1.1.-" evidence="1"/>
<dbReference type="EC" id="2.1.1.35" evidence="1"/>
<dbReference type="EMBL" id="CP000671">
    <property type="protein sequence ID" value="ABQ98877.1"/>
    <property type="molecule type" value="Genomic_DNA"/>
</dbReference>
<dbReference type="SMR" id="A5UDM6"/>
<dbReference type="KEGG" id="hip:CGSHiEE_07810"/>
<dbReference type="HOGENOM" id="CLU_043022_0_0_6"/>
<dbReference type="GO" id="GO:0005829">
    <property type="term" value="C:cytosol"/>
    <property type="evidence" value="ECO:0007669"/>
    <property type="project" value="TreeGrafter"/>
</dbReference>
<dbReference type="GO" id="GO:0019843">
    <property type="term" value="F:rRNA binding"/>
    <property type="evidence" value="ECO:0007669"/>
    <property type="project" value="TreeGrafter"/>
</dbReference>
<dbReference type="GO" id="GO:0030697">
    <property type="term" value="F:tRNA (uracil(54)-C5)-methyltransferase activity, S-adenosyl methionine-dependent"/>
    <property type="evidence" value="ECO:0007669"/>
    <property type="project" value="UniProtKB-UniRule"/>
</dbReference>
<dbReference type="GO" id="GO:0000049">
    <property type="term" value="F:tRNA binding"/>
    <property type="evidence" value="ECO:0007669"/>
    <property type="project" value="TreeGrafter"/>
</dbReference>
<dbReference type="GO" id="GO:0030488">
    <property type="term" value="P:tRNA methylation"/>
    <property type="evidence" value="ECO:0007669"/>
    <property type="project" value="UniProtKB-UniRule"/>
</dbReference>
<dbReference type="CDD" id="cd02440">
    <property type="entry name" value="AdoMet_MTases"/>
    <property type="match status" value="1"/>
</dbReference>
<dbReference type="FunFam" id="2.40.50.1070:FF:000001">
    <property type="entry name" value="tRNA/tmRNA (uracil-C(5))-methyltransferase"/>
    <property type="match status" value="1"/>
</dbReference>
<dbReference type="FunFam" id="3.40.50.150:FF:000012">
    <property type="entry name" value="tRNA/tmRNA (uracil-C(5))-methyltransferase"/>
    <property type="match status" value="1"/>
</dbReference>
<dbReference type="Gene3D" id="2.40.50.1070">
    <property type="match status" value="1"/>
</dbReference>
<dbReference type="Gene3D" id="3.40.50.150">
    <property type="entry name" value="Vaccinia Virus protein VP39"/>
    <property type="match status" value="1"/>
</dbReference>
<dbReference type="HAMAP" id="MF_01011">
    <property type="entry name" value="RNA_methyltr_TrmA"/>
    <property type="match status" value="1"/>
</dbReference>
<dbReference type="InterPro" id="IPR030390">
    <property type="entry name" value="MeTrfase_TrmA_AS"/>
</dbReference>
<dbReference type="InterPro" id="IPR030391">
    <property type="entry name" value="MeTrfase_TrmA_CS"/>
</dbReference>
<dbReference type="InterPro" id="IPR029063">
    <property type="entry name" value="SAM-dependent_MTases_sf"/>
</dbReference>
<dbReference type="InterPro" id="IPR011869">
    <property type="entry name" value="TrmA_MeTrfase"/>
</dbReference>
<dbReference type="InterPro" id="IPR010280">
    <property type="entry name" value="U5_MeTrfase_fam"/>
</dbReference>
<dbReference type="NCBIfam" id="TIGR02143">
    <property type="entry name" value="trmA_only"/>
    <property type="match status" value="1"/>
</dbReference>
<dbReference type="PANTHER" id="PTHR47790">
    <property type="entry name" value="TRNA/TMRNA (URACIL-C(5))-METHYLTRANSFERASE"/>
    <property type="match status" value="1"/>
</dbReference>
<dbReference type="PANTHER" id="PTHR47790:SF2">
    <property type="entry name" value="TRNA_TMRNA (URACIL-C(5))-METHYLTRANSFERASE"/>
    <property type="match status" value="1"/>
</dbReference>
<dbReference type="Pfam" id="PF05958">
    <property type="entry name" value="tRNA_U5-meth_tr"/>
    <property type="match status" value="1"/>
</dbReference>
<dbReference type="SUPFAM" id="SSF53335">
    <property type="entry name" value="S-adenosyl-L-methionine-dependent methyltransferases"/>
    <property type="match status" value="1"/>
</dbReference>
<dbReference type="PROSITE" id="PS51687">
    <property type="entry name" value="SAM_MT_RNA_M5U"/>
    <property type="match status" value="1"/>
</dbReference>
<dbReference type="PROSITE" id="PS01230">
    <property type="entry name" value="TRMA_1"/>
    <property type="match status" value="1"/>
</dbReference>
<dbReference type="PROSITE" id="PS01231">
    <property type="entry name" value="TRMA_2"/>
    <property type="match status" value="1"/>
</dbReference>
<name>TRMA_HAEIE</name>
<accession>A5UDM6</accession>
<proteinExistence type="inferred from homology"/>
<evidence type="ECO:0000255" key="1">
    <source>
        <dbReference type="HAMAP-Rule" id="MF_01011"/>
    </source>
</evidence>
<organism>
    <name type="scientific">Haemophilus influenzae (strain PittEE)</name>
    <dbReference type="NCBI Taxonomy" id="374930"/>
    <lineage>
        <taxon>Bacteria</taxon>
        <taxon>Pseudomonadati</taxon>
        <taxon>Pseudomonadota</taxon>
        <taxon>Gammaproteobacteria</taxon>
        <taxon>Pasteurellales</taxon>
        <taxon>Pasteurellaceae</taxon>
        <taxon>Haemophilus</taxon>
    </lineage>
</organism>
<feature type="chain" id="PRO_1000062991" description="tRNA/tmRNA (uracil-C(5))-methyltransferase">
    <location>
        <begin position="1"/>
        <end position="363"/>
    </location>
</feature>
<feature type="active site" description="Nucleophile" evidence="1">
    <location>
        <position position="321"/>
    </location>
</feature>
<feature type="active site" description="Proton acceptor" evidence="1">
    <location>
        <position position="355"/>
    </location>
</feature>
<feature type="binding site" evidence="1">
    <location>
        <position position="187"/>
    </location>
    <ligand>
        <name>S-adenosyl-L-methionine</name>
        <dbReference type="ChEBI" id="CHEBI:59789"/>
    </ligand>
</feature>
<feature type="binding site" evidence="1">
    <location>
        <position position="215"/>
    </location>
    <ligand>
        <name>S-adenosyl-L-methionine</name>
        <dbReference type="ChEBI" id="CHEBI:59789"/>
    </ligand>
</feature>
<feature type="binding site" evidence="1">
    <location>
        <position position="220"/>
    </location>
    <ligand>
        <name>S-adenosyl-L-methionine</name>
        <dbReference type="ChEBI" id="CHEBI:59789"/>
    </ligand>
</feature>
<feature type="binding site" evidence="1">
    <location>
        <position position="236"/>
    </location>
    <ligand>
        <name>S-adenosyl-L-methionine</name>
        <dbReference type="ChEBI" id="CHEBI:59789"/>
    </ligand>
</feature>
<feature type="binding site" evidence="1">
    <location>
        <position position="296"/>
    </location>
    <ligand>
        <name>S-adenosyl-L-methionine</name>
        <dbReference type="ChEBI" id="CHEBI:59789"/>
    </ligand>
</feature>